<organism>
    <name type="scientific">Maricaulis maris (strain MCS10)</name>
    <name type="common">Caulobacter maris</name>
    <dbReference type="NCBI Taxonomy" id="394221"/>
    <lineage>
        <taxon>Bacteria</taxon>
        <taxon>Pseudomonadati</taxon>
        <taxon>Pseudomonadota</taxon>
        <taxon>Alphaproteobacteria</taxon>
        <taxon>Maricaulales</taxon>
        <taxon>Maricaulaceae</taxon>
        <taxon>Maricaulis</taxon>
    </lineage>
</organism>
<sequence>MARNKIALIGSGMIGGTLAHIAAREELGDVVLFDIAEGVAKGKALDIAEASPVFGKDSKLAGADDYAAIAGADVCIVTAGVPRKPGMSRDDLLGINLKVMKAVGEGIAKHAPDAFVICITNPLDAMVWALREFSGLPHNKVVGMAGVLDSARFRHFLADEFEVSVEDVTAFVMGGHGDTMVPLLRYSTIAGIPVPDMVKMGWSTDEKMDAIIDRTRKGGGEIVALLGTGSAFYAPAESAIDMAVSYLRDKKRILPCAAYLSGQFGQDDLYVGVPVVIGAGGVEKIVEIELNADEQTMFNNSVDSVKGLVSACKGLDPSLG</sequence>
<gene>
    <name evidence="1" type="primary">mdh</name>
    <name type="ordered locus">Mmar10_2829</name>
</gene>
<reference key="1">
    <citation type="submission" date="2006-08" db="EMBL/GenBank/DDBJ databases">
        <title>Complete sequence of Maricaulis maris MCS10.</title>
        <authorList>
            <consortium name="US DOE Joint Genome Institute"/>
            <person name="Copeland A."/>
            <person name="Lucas S."/>
            <person name="Lapidus A."/>
            <person name="Barry K."/>
            <person name="Detter J.C."/>
            <person name="Glavina del Rio T."/>
            <person name="Hammon N."/>
            <person name="Israni S."/>
            <person name="Dalin E."/>
            <person name="Tice H."/>
            <person name="Pitluck S."/>
            <person name="Saunders E."/>
            <person name="Brettin T."/>
            <person name="Bruce D."/>
            <person name="Han C."/>
            <person name="Tapia R."/>
            <person name="Gilna P."/>
            <person name="Schmutz J."/>
            <person name="Larimer F."/>
            <person name="Land M."/>
            <person name="Hauser L."/>
            <person name="Kyrpides N."/>
            <person name="Mikhailova N."/>
            <person name="Viollier P."/>
            <person name="Stephens C."/>
            <person name="Richardson P."/>
        </authorList>
    </citation>
    <scope>NUCLEOTIDE SEQUENCE [LARGE SCALE GENOMIC DNA]</scope>
    <source>
        <strain>MCS10</strain>
    </source>
</reference>
<accession>Q0AKT3</accession>
<keyword id="KW-0520">NAD</keyword>
<keyword id="KW-0560">Oxidoreductase</keyword>
<keyword id="KW-1185">Reference proteome</keyword>
<keyword id="KW-0816">Tricarboxylic acid cycle</keyword>
<evidence type="ECO:0000255" key="1">
    <source>
        <dbReference type="HAMAP-Rule" id="MF_00487"/>
    </source>
</evidence>
<name>MDH_MARMM</name>
<protein>
    <recommendedName>
        <fullName evidence="1">Malate dehydrogenase</fullName>
        <ecNumber evidence="1">1.1.1.37</ecNumber>
    </recommendedName>
</protein>
<feature type="chain" id="PRO_1000026477" description="Malate dehydrogenase">
    <location>
        <begin position="1"/>
        <end position="320"/>
    </location>
</feature>
<feature type="active site" description="Proton acceptor" evidence="1">
    <location>
        <position position="176"/>
    </location>
</feature>
<feature type="binding site" evidence="1">
    <location>
        <begin position="10"/>
        <end position="15"/>
    </location>
    <ligand>
        <name>NAD(+)</name>
        <dbReference type="ChEBI" id="CHEBI:57540"/>
    </ligand>
</feature>
<feature type="binding site" evidence="1">
    <location>
        <position position="34"/>
    </location>
    <ligand>
        <name>NAD(+)</name>
        <dbReference type="ChEBI" id="CHEBI:57540"/>
    </ligand>
</feature>
<feature type="binding site" evidence="1">
    <location>
        <position position="83"/>
    </location>
    <ligand>
        <name>substrate</name>
    </ligand>
</feature>
<feature type="binding site" evidence="1">
    <location>
        <position position="89"/>
    </location>
    <ligand>
        <name>substrate</name>
    </ligand>
</feature>
<feature type="binding site" evidence="1">
    <location>
        <position position="96"/>
    </location>
    <ligand>
        <name>NAD(+)</name>
        <dbReference type="ChEBI" id="CHEBI:57540"/>
    </ligand>
</feature>
<feature type="binding site" evidence="1">
    <location>
        <begin position="119"/>
        <end position="121"/>
    </location>
    <ligand>
        <name>NAD(+)</name>
        <dbReference type="ChEBI" id="CHEBI:57540"/>
    </ligand>
</feature>
<feature type="binding site" evidence="1">
    <location>
        <position position="121"/>
    </location>
    <ligand>
        <name>substrate</name>
    </ligand>
</feature>
<feature type="binding site" evidence="1">
    <location>
        <position position="152"/>
    </location>
    <ligand>
        <name>substrate</name>
    </ligand>
</feature>
<comment type="function">
    <text evidence="1">Catalyzes the reversible oxidation of malate to oxaloacetate.</text>
</comment>
<comment type="catalytic activity">
    <reaction evidence="1">
        <text>(S)-malate + NAD(+) = oxaloacetate + NADH + H(+)</text>
        <dbReference type="Rhea" id="RHEA:21432"/>
        <dbReference type="ChEBI" id="CHEBI:15378"/>
        <dbReference type="ChEBI" id="CHEBI:15589"/>
        <dbReference type="ChEBI" id="CHEBI:16452"/>
        <dbReference type="ChEBI" id="CHEBI:57540"/>
        <dbReference type="ChEBI" id="CHEBI:57945"/>
        <dbReference type="EC" id="1.1.1.37"/>
    </reaction>
</comment>
<comment type="similarity">
    <text evidence="1">Belongs to the LDH/MDH superfamily. MDH type 3 family.</text>
</comment>
<proteinExistence type="inferred from homology"/>
<dbReference type="EC" id="1.1.1.37" evidence="1"/>
<dbReference type="EMBL" id="CP000449">
    <property type="protein sequence ID" value="ABI67110.1"/>
    <property type="molecule type" value="Genomic_DNA"/>
</dbReference>
<dbReference type="RefSeq" id="WP_011644754.1">
    <property type="nucleotide sequence ID" value="NC_008347.1"/>
</dbReference>
<dbReference type="SMR" id="Q0AKT3"/>
<dbReference type="STRING" id="394221.Mmar10_2829"/>
<dbReference type="KEGG" id="mmr:Mmar10_2829"/>
<dbReference type="eggNOG" id="COG0039">
    <property type="taxonomic scope" value="Bacteria"/>
</dbReference>
<dbReference type="HOGENOM" id="CLU_045401_2_1_5"/>
<dbReference type="OrthoDB" id="9802969at2"/>
<dbReference type="Proteomes" id="UP000001964">
    <property type="component" value="Chromosome"/>
</dbReference>
<dbReference type="GO" id="GO:0004459">
    <property type="term" value="F:L-lactate dehydrogenase activity"/>
    <property type="evidence" value="ECO:0007669"/>
    <property type="project" value="TreeGrafter"/>
</dbReference>
<dbReference type="GO" id="GO:0030060">
    <property type="term" value="F:L-malate dehydrogenase (NAD+) activity"/>
    <property type="evidence" value="ECO:0007669"/>
    <property type="project" value="UniProtKB-UniRule"/>
</dbReference>
<dbReference type="GO" id="GO:0006089">
    <property type="term" value="P:lactate metabolic process"/>
    <property type="evidence" value="ECO:0007669"/>
    <property type="project" value="TreeGrafter"/>
</dbReference>
<dbReference type="GO" id="GO:0006099">
    <property type="term" value="P:tricarboxylic acid cycle"/>
    <property type="evidence" value="ECO:0007669"/>
    <property type="project" value="UniProtKB-UniRule"/>
</dbReference>
<dbReference type="CDD" id="cd01339">
    <property type="entry name" value="LDH-like_MDH"/>
    <property type="match status" value="1"/>
</dbReference>
<dbReference type="FunFam" id="3.40.50.720:FF:000018">
    <property type="entry name" value="Malate dehydrogenase"/>
    <property type="match status" value="1"/>
</dbReference>
<dbReference type="FunFam" id="3.90.110.10:FF:000004">
    <property type="entry name" value="Malate dehydrogenase"/>
    <property type="match status" value="1"/>
</dbReference>
<dbReference type="Gene3D" id="3.90.110.10">
    <property type="entry name" value="Lactate dehydrogenase/glycoside hydrolase, family 4, C-terminal"/>
    <property type="match status" value="1"/>
</dbReference>
<dbReference type="Gene3D" id="3.40.50.720">
    <property type="entry name" value="NAD(P)-binding Rossmann-like Domain"/>
    <property type="match status" value="1"/>
</dbReference>
<dbReference type="HAMAP" id="MF_00487">
    <property type="entry name" value="Malate_dehydrog_3"/>
    <property type="match status" value="1"/>
</dbReference>
<dbReference type="InterPro" id="IPR001557">
    <property type="entry name" value="L-lactate/malate_DH"/>
</dbReference>
<dbReference type="InterPro" id="IPR022383">
    <property type="entry name" value="Lactate/malate_DH_C"/>
</dbReference>
<dbReference type="InterPro" id="IPR001236">
    <property type="entry name" value="Lactate/malate_DH_N"/>
</dbReference>
<dbReference type="InterPro" id="IPR015955">
    <property type="entry name" value="Lactate_DH/Glyco_Ohase_4_C"/>
</dbReference>
<dbReference type="InterPro" id="IPR011275">
    <property type="entry name" value="Malate_DH_type3"/>
</dbReference>
<dbReference type="InterPro" id="IPR036291">
    <property type="entry name" value="NAD(P)-bd_dom_sf"/>
</dbReference>
<dbReference type="NCBIfam" id="TIGR01763">
    <property type="entry name" value="MalateDH_bact"/>
    <property type="match status" value="1"/>
</dbReference>
<dbReference type="NCBIfam" id="NF004863">
    <property type="entry name" value="PRK06223.1"/>
    <property type="match status" value="1"/>
</dbReference>
<dbReference type="PANTHER" id="PTHR43128">
    <property type="entry name" value="L-2-HYDROXYCARBOXYLATE DEHYDROGENASE (NAD(P)(+))"/>
    <property type="match status" value="1"/>
</dbReference>
<dbReference type="PANTHER" id="PTHR43128:SF16">
    <property type="entry name" value="L-LACTATE DEHYDROGENASE"/>
    <property type="match status" value="1"/>
</dbReference>
<dbReference type="Pfam" id="PF02866">
    <property type="entry name" value="Ldh_1_C"/>
    <property type="match status" value="1"/>
</dbReference>
<dbReference type="Pfam" id="PF00056">
    <property type="entry name" value="Ldh_1_N"/>
    <property type="match status" value="1"/>
</dbReference>
<dbReference type="PIRSF" id="PIRSF000102">
    <property type="entry name" value="Lac_mal_DH"/>
    <property type="match status" value="1"/>
</dbReference>
<dbReference type="PRINTS" id="PR00086">
    <property type="entry name" value="LLDHDRGNASE"/>
</dbReference>
<dbReference type="SUPFAM" id="SSF56327">
    <property type="entry name" value="LDH C-terminal domain-like"/>
    <property type="match status" value="1"/>
</dbReference>
<dbReference type="SUPFAM" id="SSF51735">
    <property type="entry name" value="NAD(P)-binding Rossmann-fold domains"/>
    <property type="match status" value="1"/>
</dbReference>